<accession>A8G5I7</accession>
<gene>
    <name evidence="1" type="primary">psbY</name>
    <name type="ordered locus">P9215_12531</name>
</gene>
<organism>
    <name type="scientific">Prochlorococcus marinus (strain MIT 9215)</name>
    <dbReference type="NCBI Taxonomy" id="93060"/>
    <lineage>
        <taxon>Bacteria</taxon>
        <taxon>Bacillati</taxon>
        <taxon>Cyanobacteriota</taxon>
        <taxon>Cyanophyceae</taxon>
        <taxon>Synechococcales</taxon>
        <taxon>Prochlorococcaceae</taxon>
        <taxon>Prochlorococcus</taxon>
    </lineage>
</organism>
<reference key="1">
    <citation type="journal article" date="2007" name="PLoS Genet.">
        <title>Patterns and implications of gene gain and loss in the evolution of Prochlorococcus.</title>
        <authorList>
            <person name="Kettler G.C."/>
            <person name="Martiny A.C."/>
            <person name="Huang K."/>
            <person name="Zucker J."/>
            <person name="Coleman M.L."/>
            <person name="Rodrigue S."/>
            <person name="Chen F."/>
            <person name="Lapidus A."/>
            <person name="Ferriera S."/>
            <person name="Johnson J."/>
            <person name="Steglich C."/>
            <person name="Church G.M."/>
            <person name="Richardson P."/>
            <person name="Chisholm S.W."/>
        </authorList>
    </citation>
    <scope>NUCLEOTIDE SEQUENCE [LARGE SCALE GENOMIC DNA]</scope>
    <source>
        <strain>MIT 9215</strain>
    </source>
</reference>
<protein>
    <recommendedName>
        <fullName evidence="1">Photosystem II reaction center protein Y</fullName>
    </recommendedName>
</protein>
<sequence length="38" mass="4389">MLRTIVVFAPIIAALAWVVFNIQKPAREQFNRDFLGKD</sequence>
<proteinExistence type="inferred from homology"/>
<feature type="chain" id="PRO_1000062086" description="Photosystem II reaction center protein Y">
    <location>
        <begin position="1"/>
        <end position="38"/>
    </location>
</feature>
<feature type="transmembrane region" description="Helical" evidence="1">
    <location>
        <begin position="4"/>
        <end position="22"/>
    </location>
</feature>
<dbReference type="EMBL" id="CP000825">
    <property type="protein sequence ID" value="ABV50868.1"/>
    <property type="molecule type" value="Genomic_DNA"/>
</dbReference>
<dbReference type="RefSeq" id="WP_002807463.1">
    <property type="nucleotide sequence ID" value="NC_009840.1"/>
</dbReference>
<dbReference type="SMR" id="A8G5I7"/>
<dbReference type="STRING" id="93060.P9215_12531"/>
<dbReference type="KEGG" id="pmh:P9215_12531"/>
<dbReference type="HOGENOM" id="CLU_218393_0_0_3"/>
<dbReference type="OrthoDB" id="541796at2"/>
<dbReference type="Proteomes" id="UP000002014">
    <property type="component" value="Chromosome"/>
</dbReference>
<dbReference type="GO" id="GO:0009523">
    <property type="term" value="C:photosystem II"/>
    <property type="evidence" value="ECO:0007669"/>
    <property type="project" value="UniProtKB-KW"/>
</dbReference>
<dbReference type="GO" id="GO:0031676">
    <property type="term" value="C:plasma membrane-derived thylakoid membrane"/>
    <property type="evidence" value="ECO:0007669"/>
    <property type="project" value="UniProtKB-SubCell"/>
</dbReference>
<dbReference type="GO" id="GO:0030145">
    <property type="term" value="F:manganese ion binding"/>
    <property type="evidence" value="ECO:0007669"/>
    <property type="project" value="InterPro"/>
</dbReference>
<dbReference type="GO" id="GO:0015979">
    <property type="term" value="P:photosynthesis"/>
    <property type="evidence" value="ECO:0007669"/>
    <property type="project" value="UniProtKB-UniRule"/>
</dbReference>
<dbReference type="HAMAP" id="MF_00717">
    <property type="entry name" value="PSII_PsbY"/>
    <property type="match status" value="1"/>
</dbReference>
<dbReference type="InterPro" id="IPR009388">
    <property type="entry name" value="PSII_PsbY"/>
</dbReference>
<dbReference type="NCBIfam" id="NF009711">
    <property type="entry name" value="PRK13240.1"/>
    <property type="match status" value="1"/>
</dbReference>
<dbReference type="Pfam" id="PF06298">
    <property type="entry name" value="PsbY"/>
    <property type="match status" value="1"/>
</dbReference>
<comment type="function">
    <text evidence="1">Loosely associated component of the core of photosystem II (PSII), it is not always seen in crystals. PSII is a light-driven water plastoquinone oxidoreductase, using light energy to abstract electrons from H(2)O, generating a proton gradient subsequently used for ATP formation.</text>
</comment>
<comment type="subunit">
    <text evidence="2">PSII is composed of 1 copy each of membrane proteins PsbA, PsbB, PsbC, PsbD, PsbE, PsbF, PsbH, PsbI, PsbJ, PsbK, PsbL, PsbM, PsbT, PsbX, PsbY, Psb30/Ycf12, peripheral proteins PsbO, CyanoQ (PsbQ), PsbU, PsbV and a large number of cofactors. It forms dimeric complexes.</text>
</comment>
<comment type="subcellular location">
    <subcellularLocation>
        <location evidence="1">Cellular thylakoid membrane</location>
        <topology evidence="1">Single-pass membrane protein</topology>
    </subcellularLocation>
</comment>
<comment type="similarity">
    <text evidence="1">Belongs to the PsbY family.</text>
</comment>
<name>PSBY_PROM2</name>
<evidence type="ECO:0000255" key="1">
    <source>
        <dbReference type="HAMAP-Rule" id="MF_00717"/>
    </source>
</evidence>
<evidence type="ECO:0000305" key="2"/>
<keyword id="KW-0472">Membrane</keyword>
<keyword id="KW-0602">Photosynthesis</keyword>
<keyword id="KW-0604">Photosystem II</keyword>
<keyword id="KW-0793">Thylakoid</keyword>
<keyword id="KW-0812">Transmembrane</keyword>
<keyword id="KW-1133">Transmembrane helix</keyword>